<name>RL15_FLAJ1</name>
<organism>
    <name type="scientific">Flavobacterium johnsoniae (strain ATCC 17061 / DSM 2064 / JCM 8514 / BCRC 14874 / CCUG 350202 / NBRC 14942 / NCIMB 11054 / UW101)</name>
    <name type="common">Cytophaga johnsonae</name>
    <dbReference type="NCBI Taxonomy" id="376686"/>
    <lineage>
        <taxon>Bacteria</taxon>
        <taxon>Pseudomonadati</taxon>
        <taxon>Bacteroidota</taxon>
        <taxon>Flavobacteriia</taxon>
        <taxon>Flavobacteriales</taxon>
        <taxon>Flavobacteriaceae</taxon>
        <taxon>Flavobacterium</taxon>
    </lineage>
</organism>
<protein>
    <recommendedName>
        <fullName evidence="1">Large ribosomal subunit protein uL15</fullName>
    </recommendedName>
    <alternativeName>
        <fullName evidence="3">50S ribosomal protein L15</fullName>
    </alternativeName>
</protein>
<dbReference type="EMBL" id="CP000685">
    <property type="protein sequence ID" value="ABQ03414.1"/>
    <property type="molecule type" value="Genomic_DNA"/>
</dbReference>
<dbReference type="RefSeq" id="WP_012022480.1">
    <property type="nucleotide sequence ID" value="NZ_MUGZ01000005.1"/>
</dbReference>
<dbReference type="SMR" id="A5FN02"/>
<dbReference type="STRING" id="376686.Fjoh_0378"/>
<dbReference type="KEGG" id="fjo:Fjoh_0378"/>
<dbReference type="eggNOG" id="COG0200">
    <property type="taxonomic scope" value="Bacteria"/>
</dbReference>
<dbReference type="HOGENOM" id="CLU_055188_4_0_10"/>
<dbReference type="OrthoDB" id="9810293at2"/>
<dbReference type="Proteomes" id="UP000006694">
    <property type="component" value="Chromosome"/>
</dbReference>
<dbReference type="GO" id="GO:0022625">
    <property type="term" value="C:cytosolic large ribosomal subunit"/>
    <property type="evidence" value="ECO:0007669"/>
    <property type="project" value="TreeGrafter"/>
</dbReference>
<dbReference type="GO" id="GO:0019843">
    <property type="term" value="F:rRNA binding"/>
    <property type="evidence" value="ECO:0007669"/>
    <property type="project" value="UniProtKB-UniRule"/>
</dbReference>
<dbReference type="GO" id="GO:0003735">
    <property type="term" value="F:structural constituent of ribosome"/>
    <property type="evidence" value="ECO:0007669"/>
    <property type="project" value="InterPro"/>
</dbReference>
<dbReference type="GO" id="GO:0006412">
    <property type="term" value="P:translation"/>
    <property type="evidence" value="ECO:0007669"/>
    <property type="project" value="UniProtKB-UniRule"/>
</dbReference>
<dbReference type="Gene3D" id="3.100.10.10">
    <property type="match status" value="1"/>
</dbReference>
<dbReference type="HAMAP" id="MF_01341">
    <property type="entry name" value="Ribosomal_uL15"/>
    <property type="match status" value="1"/>
</dbReference>
<dbReference type="InterPro" id="IPR030878">
    <property type="entry name" value="Ribosomal_uL15"/>
</dbReference>
<dbReference type="InterPro" id="IPR021131">
    <property type="entry name" value="Ribosomal_uL15/eL18"/>
</dbReference>
<dbReference type="InterPro" id="IPR036227">
    <property type="entry name" value="Ribosomal_uL15/eL18_sf"/>
</dbReference>
<dbReference type="InterPro" id="IPR005749">
    <property type="entry name" value="Ribosomal_uL15_bac-type"/>
</dbReference>
<dbReference type="InterPro" id="IPR001196">
    <property type="entry name" value="Ribosomal_uL15_CS"/>
</dbReference>
<dbReference type="NCBIfam" id="TIGR01071">
    <property type="entry name" value="rplO_bact"/>
    <property type="match status" value="1"/>
</dbReference>
<dbReference type="PANTHER" id="PTHR12934">
    <property type="entry name" value="50S RIBOSOMAL PROTEIN L15"/>
    <property type="match status" value="1"/>
</dbReference>
<dbReference type="PANTHER" id="PTHR12934:SF11">
    <property type="entry name" value="LARGE RIBOSOMAL SUBUNIT PROTEIN UL15M"/>
    <property type="match status" value="1"/>
</dbReference>
<dbReference type="Pfam" id="PF00828">
    <property type="entry name" value="Ribosomal_L27A"/>
    <property type="match status" value="1"/>
</dbReference>
<dbReference type="SUPFAM" id="SSF52080">
    <property type="entry name" value="Ribosomal proteins L15p and L18e"/>
    <property type="match status" value="1"/>
</dbReference>
<dbReference type="PROSITE" id="PS00475">
    <property type="entry name" value="RIBOSOMAL_L15"/>
    <property type="match status" value="1"/>
</dbReference>
<evidence type="ECO:0000255" key="1">
    <source>
        <dbReference type="HAMAP-Rule" id="MF_01341"/>
    </source>
</evidence>
<evidence type="ECO:0000256" key="2">
    <source>
        <dbReference type="SAM" id="MobiDB-lite"/>
    </source>
</evidence>
<evidence type="ECO:0000305" key="3"/>
<accession>A5FN02</accession>
<sequence>MNLSNLQPAEGSTHNQNKRVGRGEGSGKGGTAARGHKGAKSRSGYSKKIGFEGGQMPLQRRVPKFGFKNINRKEYEGVNLDTLQLLVDNGVITDSVSMTDFVANRLASKNEIVKILGRGELKAKLKVTAHKFTATAKAAIEAAGGEAVTI</sequence>
<gene>
    <name evidence="1" type="primary">rplO</name>
    <name type="ordered locus">Fjoh_0378</name>
</gene>
<proteinExistence type="inferred from homology"/>
<reference key="1">
    <citation type="journal article" date="2009" name="Appl. Environ. Microbiol.">
        <title>Novel features of the polysaccharide-digesting gliding bacterium Flavobacterium johnsoniae as revealed by genome sequence analysis.</title>
        <authorList>
            <person name="McBride M.J."/>
            <person name="Xie G."/>
            <person name="Martens E.C."/>
            <person name="Lapidus A."/>
            <person name="Henrissat B."/>
            <person name="Rhodes R.G."/>
            <person name="Goltsman E."/>
            <person name="Wang W."/>
            <person name="Xu J."/>
            <person name="Hunnicutt D.W."/>
            <person name="Staroscik A.M."/>
            <person name="Hoover T.R."/>
            <person name="Cheng Y.Q."/>
            <person name="Stein J.L."/>
        </authorList>
    </citation>
    <scope>NUCLEOTIDE SEQUENCE [LARGE SCALE GENOMIC DNA]</scope>
    <source>
        <strain>ATCC 17061 / DSM 2064 / JCM 8514 / BCRC 14874 / CCUG 350202 / NBRC 14942 / NCIMB 11054 / UW101</strain>
    </source>
</reference>
<keyword id="KW-0687">Ribonucleoprotein</keyword>
<keyword id="KW-0689">Ribosomal protein</keyword>
<keyword id="KW-0694">RNA-binding</keyword>
<keyword id="KW-0699">rRNA-binding</keyword>
<comment type="function">
    <text evidence="1">Binds to the 23S rRNA.</text>
</comment>
<comment type="subunit">
    <text evidence="1">Part of the 50S ribosomal subunit.</text>
</comment>
<comment type="similarity">
    <text evidence="1">Belongs to the universal ribosomal protein uL15 family.</text>
</comment>
<feature type="chain" id="PRO_1000086713" description="Large ribosomal subunit protein uL15">
    <location>
        <begin position="1"/>
        <end position="150"/>
    </location>
</feature>
<feature type="region of interest" description="Disordered" evidence="2">
    <location>
        <begin position="1"/>
        <end position="53"/>
    </location>
</feature>
<feature type="compositionally biased region" description="Polar residues" evidence="2">
    <location>
        <begin position="1"/>
        <end position="15"/>
    </location>
</feature>
<feature type="compositionally biased region" description="Gly residues" evidence="2">
    <location>
        <begin position="23"/>
        <end position="32"/>
    </location>
</feature>